<organism>
    <name type="scientific">Leptospira biflexa serovar Patoc (strain Patoc 1 / Ames)</name>
    <dbReference type="NCBI Taxonomy" id="355278"/>
    <lineage>
        <taxon>Bacteria</taxon>
        <taxon>Pseudomonadati</taxon>
        <taxon>Spirochaetota</taxon>
        <taxon>Spirochaetia</taxon>
        <taxon>Leptospirales</taxon>
        <taxon>Leptospiraceae</taxon>
        <taxon>Leptospira</taxon>
    </lineage>
</organism>
<comment type="function">
    <text evidence="1">Activates KDO (a required 8-carbon sugar) for incorporation into bacterial lipopolysaccharide in Gram-negative bacteria.</text>
</comment>
<comment type="catalytic activity">
    <reaction evidence="1">
        <text>3-deoxy-alpha-D-manno-oct-2-ulosonate + CTP = CMP-3-deoxy-beta-D-manno-octulosonate + diphosphate</text>
        <dbReference type="Rhea" id="RHEA:23448"/>
        <dbReference type="ChEBI" id="CHEBI:33019"/>
        <dbReference type="ChEBI" id="CHEBI:37563"/>
        <dbReference type="ChEBI" id="CHEBI:85986"/>
        <dbReference type="ChEBI" id="CHEBI:85987"/>
        <dbReference type="EC" id="2.7.7.38"/>
    </reaction>
</comment>
<comment type="pathway">
    <text evidence="1">Nucleotide-sugar biosynthesis; CMP-3-deoxy-D-manno-octulosonate biosynthesis; CMP-3-deoxy-D-manno-octulosonate from 3-deoxy-D-manno-octulosonate and CTP: step 1/1.</text>
</comment>
<comment type="pathway">
    <text evidence="1">Bacterial outer membrane biogenesis; lipopolysaccharide biosynthesis.</text>
</comment>
<comment type="subcellular location">
    <subcellularLocation>
        <location evidence="1">Cytoplasm</location>
    </subcellularLocation>
</comment>
<comment type="similarity">
    <text evidence="1">Belongs to the KdsB family.</text>
</comment>
<evidence type="ECO:0000255" key="1">
    <source>
        <dbReference type="HAMAP-Rule" id="MF_00057"/>
    </source>
</evidence>
<dbReference type="EC" id="2.7.7.38" evidence="1"/>
<dbReference type="EMBL" id="CP000777">
    <property type="protein sequence ID" value="ABZ92740.1"/>
    <property type="molecule type" value="Genomic_DNA"/>
</dbReference>
<dbReference type="RefSeq" id="WP_012387232.1">
    <property type="nucleotide sequence ID" value="NC_010842.1"/>
</dbReference>
<dbReference type="SMR" id="B0SA58"/>
<dbReference type="KEGG" id="lbf:LBF_0194"/>
<dbReference type="HOGENOM" id="CLU_065038_0_1_12"/>
<dbReference type="UniPathway" id="UPA00030"/>
<dbReference type="UniPathway" id="UPA00358">
    <property type="reaction ID" value="UER00476"/>
</dbReference>
<dbReference type="GO" id="GO:0005829">
    <property type="term" value="C:cytosol"/>
    <property type="evidence" value="ECO:0007669"/>
    <property type="project" value="TreeGrafter"/>
</dbReference>
<dbReference type="GO" id="GO:0008690">
    <property type="term" value="F:3-deoxy-manno-octulosonate cytidylyltransferase activity"/>
    <property type="evidence" value="ECO:0007669"/>
    <property type="project" value="UniProtKB-UniRule"/>
</dbReference>
<dbReference type="GO" id="GO:0033468">
    <property type="term" value="P:CMP-keto-3-deoxy-D-manno-octulosonic acid biosynthetic process"/>
    <property type="evidence" value="ECO:0007669"/>
    <property type="project" value="UniProtKB-UniRule"/>
</dbReference>
<dbReference type="GO" id="GO:0009103">
    <property type="term" value="P:lipopolysaccharide biosynthetic process"/>
    <property type="evidence" value="ECO:0007669"/>
    <property type="project" value="UniProtKB-UniRule"/>
</dbReference>
<dbReference type="CDD" id="cd02517">
    <property type="entry name" value="CMP-KDO-Synthetase"/>
    <property type="match status" value="1"/>
</dbReference>
<dbReference type="FunFam" id="3.90.550.10:FF:000011">
    <property type="entry name" value="3-deoxy-manno-octulosonate cytidylyltransferase"/>
    <property type="match status" value="1"/>
</dbReference>
<dbReference type="Gene3D" id="3.90.550.10">
    <property type="entry name" value="Spore Coat Polysaccharide Biosynthesis Protein SpsA, Chain A"/>
    <property type="match status" value="1"/>
</dbReference>
<dbReference type="HAMAP" id="MF_00057">
    <property type="entry name" value="KdsB"/>
    <property type="match status" value="1"/>
</dbReference>
<dbReference type="InterPro" id="IPR003329">
    <property type="entry name" value="Cytidylyl_trans"/>
</dbReference>
<dbReference type="InterPro" id="IPR004528">
    <property type="entry name" value="KdsB"/>
</dbReference>
<dbReference type="InterPro" id="IPR029044">
    <property type="entry name" value="Nucleotide-diphossugar_trans"/>
</dbReference>
<dbReference type="NCBIfam" id="TIGR00466">
    <property type="entry name" value="kdsB"/>
    <property type="match status" value="1"/>
</dbReference>
<dbReference type="NCBIfam" id="NF003950">
    <property type="entry name" value="PRK05450.1-3"/>
    <property type="match status" value="1"/>
</dbReference>
<dbReference type="NCBIfam" id="NF003952">
    <property type="entry name" value="PRK05450.1-5"/>
    <property type="match status" value="1"/>
</dbReference>
<dbReference type="PANTHER" id="PTHR42866">
    <property type="entry name" value="3-DEOXY-MANNO-OCTULOSONATE CYTIDYLYLTRANSFERASE"/>
    <property type="match status" value="1"/>
</dbReference>
<dbReference type="PANTHER" id="PTHR42866:SF2">
    <property type="entry name" value="3-DEOXY-MANNO-OCTULOSONATE CYTIDYLYLTRANSFERASE, MITOCHONDRIAL"/>
    <property type="match status" value="1"/>
</dbReference>
<dbReference type="Pfam" id="PF02348">
    <property type="entry name" value="CTP_transf_3"/>
    <property type="match status" value="1"/>
</dbReference>
<dbReference type="SUPFAM" id="SSF53448">
    <property type="entry name" value="Nucleotide-diphospho-sugar transferases"/>
    <property type="match status" value="1"/>
</dbReference>
<accession>B0SA58</accession>
<protein>
    <recommendedName>
        <fullName evidence="1">3-deoxy-manno-octulosonate cytidylyltransferase</fullName>
        <ecNumber evidence="1">2.7.7.38</ecNumber>
    </recommendedName>
    <alternativeName>
        <fullName evidence="1">CMP-2-keto-3-deoxyoctulosonic acid synthase</fullName>
        <shortName evidence="1">CKS</shortName>
        <shortName evidence="1">CMP-KDO synthase</shortName>
    </alternativeName>
</protein>
<feature type="chain" id="PRO_0000370083" description="3-deoxy-manno-octulosonate cytidylyltransferase">
    <location>
        <begin position="1"/>
        <end position="246"/>
    </location>
</feature>
<gene>
    <name evidence="1" type="primary">kdsB</name>
    <name type="ordered locus">LBF_0194</name>
</gene>
<proteinExistence type="inferred from homology"/>
<keyword id="KW-0963">Cytoplasm</keyword>
<keyword id="KW-0448">Lipopolysaccharide biosynthesis</keyword>
<keyword id="KW-0548">Nucleotidyltransferase</keyword>
<keyword id="KW-0808">Transferase</keyword>
<sequence>MSDQILGVIPARFASTRFPGKPLALIGTKPMIQWTYHHASLSKSFHRLVVATDDKRIHDVVLGFGGESVLTSPDHPTGTDRIIEVAETYPNYGIIVNIQGDEPGMEASLIDGVVGLKTKHRNWEMTTAAVPFTSAEDPKDPNKVKVVFDNKGRANYFSRSPIPASFKGEAKYHRHLGIYAYERDFLMNYNQLPPSDWETVESLEQLRALQNGSTIGVYLSDKANLGVDSPADLEVVITEFKKKGLL</sequence>
<reference key="1">
    <citation type="journal article" date="2008" name="PLoS ONE">
        <title>Genome sequence of the saprophyte Leptospira biflexa provides insights into the evolution of Leptospira and the pathogenesis of leptospirosis.</title>
        <authorList>
            <person name="Picardeau M."/>
            <person name="Bulach D.M."/>
            <person name="Bouchier C."/>
            <person name="Zuerner R.L."/>
            <person name="Zidane N."/>
            <person name="Wilson P.J."/>
            <person name="Creno S."/>
            <person name="Kuczek E.S."/>
            <person name="Bommezzadri S."/>
            <person name="Davis J.C."/>
            <person name="McGrath A."/>
            <person name="Johnson M.J."/>
            <person name="Boursaux-Eude C."/>
            <person name="Seemann T."/>
            <person name="Rouy Z."/>
            <person name="Coppel R.L."/>
            <person name="Rood J.I."/>
            <person name="Lajus A."/>
            <person name="Davies J.K."/>
            <person name="Medigue C."/>
            <person name="Adler B."/>
        </authorList>
    </citation>
    <scope>NUCLEOTIDE SEQUENCE [LARGE SCALE GENOMIC DNA]</scope>
    <source>
        <strain>Patoc 1 / Ames</strain>
    </source>
</reference>
<name>KDSB_LEPBA</name>